<protein>
    <recommendedName>
        <fullName>DEP domain-containing protein 1B</fullName>
    </recommendedName>
</protein>
<evidence type="ECO:0000255" key="1">
    <source>
        <dbReference type="PROSITE-ProRule" id="PRU00172"/>
    </source>
</evidence>
<gene>
    <name type="primary">DEPDC1B</name>
    <name type="ORF">RCJMB04_6k16</name>
</gene>
<reference key="1">
    <citation type="journal article" date="2005" name="Genome Biol.">
        <title>Full-length cDNAs from chicken bursal lymphocytes to facilitate gene function analysis.</title>
        <authorList>
            <person name="Caldwell R.B."/>
            <person name="Kierzek A.M."/>
            <person name="Arakawa H."/>
            <person name="Bezzubov Y."/>
            <person name="Zaim J."/>
            <person name="Fiedler P."/>
            <person name="Kutter S."/>
            <person name="Blagodatski A."/>
            <person name="Kostovska D."/>
            <person name="Koter M."/>
            <person name="Plachy J."/>
            <person name="Carninci P."/>
            <person name="Hayashizaki Y."/>
            <person name="Buerstedde J.-M."/>
        </authorList>
    </citation>
    <scope>NUCLEOTIDE SEQUENCE [LARGE SCALE MRNA]</scope>
    <source>
        <strain>CB</strain>
        <tissue>Bursa of Fabricius</tissue>
    </source>
</reference>
<accession>Q5ZLD2</accession>
<dbReference type="EMBL" id="AJ719802">
    <property type="protein sequence ID" value="CAG31461.1"/>
    <property type="molecule type" value="mRNA"/>
</dbReference>
<dbReference type="RefSeq" id="NP_001006576.1">
    <property type="nucleotide sequence ID" value="NM_001006576.1"/>
</dbReference>
<dbReference type="SMR" id="Q5ZLD2"/>
<dbReference type="FunCoup" id="Q5ZLD2">
    <property type="interactions" value="404"/>
</dbReference>
<dbReference type="STRING" id="9031.ENSGALP00000023706"/>
<dbReference type="PaxDb" id="9031-ENSGALP00000023706"/>
<dbReference type="GeneID" id="427152"/>
<dbReference type="KEGG" id="gga:427152"/>
<dbReference type="CTD" id="55789"/>
<dbReference type="VEuPathDB" id="HostDB:geneid_427152"/>
<dbReference type="eggNOG" id="ENOG502QR00">
    <property type="taxonomic scope" value="Eukaryota"/>
</dbReference>
<dbReference type="InParanoid" id="Q5ZLD2"/>
<dbReference type="OrthoDB" id="524326at2759"/>
<dbReference type="PhylomeDB" id="Q5ZLD2"/>
<dbReference type="PRO" id="PR:Q5ZLD2"/>
<dbReference type="Proteomes" id="UP000000539">
    <property type="component" value="Unassembled WGS sequence"/>
</dbReference>
<dbReference type="GO" id="GO:0005096">
    <property type="term" value="F:GTPase activator activity"/>
    <property type="evidence" value="ECO:0007669"/>
    <property type="project" value="UniProtKB-KW"/>
</dbReference>
<dbReference type="GO" id="GO:0035556">
    <property type="term" value="P:intracellular signal transduction"/>
    <property type="evidence" value="ECO:0007669"/>
    <property type="project" value="InterPro"/>
</dbReference>
<dbReference type="GO" id="GO:0030177">
    <property type="term" value="P:positive regulation of Wnt signaling pathway"/>
    <property type="evidence" value="ECO:0000318"/>
    <property type="project" value="GO_Central"/>
</dbReference>
<dbReference type="CDD" id="cd04447">
    <property type="entry name" value="DEP_BRCC3"/>
    <property type="match status" value="1"/>
</dbReference>
<dbReference type="CDD" id="cd04405">
    <property type="entry name" value="RhoGAP_BRCC3-like"/>
    <property type="match status" value="1"/>
</dbReference>
<dbReference type="FunFam" id="1.10.10.10:FF:000182">
    <property type="entry name" value="DEP domain-containing protein 1B isoform 1"/>
    <property type="match status" value="1"/>
</dbReference>
<dbReference type="FunFam" id="1.10.555.10:FF:000029">
    <property type="entry name" value="DEP domain-containing protein 1B isoform X2"/>
    <property type="match status" value="1"/>
</dbReference>
<dbReference type="Gene3D" id="1.10.555.10">
    <property type="entry name" value="Rho GTPase activation protein"/>
    <property type="match status" value="1"/>
</dbReference>
<dbReference type="Gene3D" id="1.10.10.10">
    <property type="entry name" value="Winged helix-like DNA-binding domain superfamily/Winged helix DNA-binding domain"/>
    <property type="match status" value="1"/>
</dbReference>
<dbReference type="InterPro" id="IPR000591">
    <property type="entry name" value="DEP_dom"/>
</dbReference>
<dbReference type="InterPro" id="IPR008936">
    <property type="entry name" value="Rho_GTPase_activation_prot"/>
</dbReference>
<dbReference type="InterPro" id="IPR000198">
    <property type="entry name" value="RhoGAP_dom"/>
</dbReference>
<dbReference type="InterPro" id="IPR036388">
    <property type="entry name" value="WH-like_DNA-bd_sf"/>
</dbReference>
<dbReference type="InterPro" id="IPR036390">
    <property type="entry name" value="WH_DNA-bd_sf"/>
</dbReference>
<dbReference type="PANTHER" id="PTHR16206">
    <property type="entry name" value="DEP DOMAIN-CONTAINING"/>
    <property type="match status" value="1"/>
</dbReference>
<dbReference type="PANTHER" id="PTHR16206:SF11">
    <property type="entry name" value="DEP DOMAIN-CONTAINING PROTEIN 1B"/>
    <property type="match status" value="1"/>
</dbReference>
<dbReference type="Pfam" id="PF00610">
    <property type="entry name" value="DEP"/>
    <property type="match status" value="1"/>
</dbReference>
<dbReference type="Pfam" id="PF00620">
    <property type="entry name" value="RhoGAP"/>
    <property type="match status" value="1"/>
</dbReference>
<dbReference type="SMART" id="SM00049">
    <property type="entry name" value="DEP"/>
    <property type="match status" value="1"/>
</dbReference>
<dbReference type="SUPFAM" id="SSF48350">
    <property type="entry name" value="GTPase activation domain, GAP"/>
    <property type="match status" value="1"/>
</dbReference>
<dbReference type="SUPFAM" id="SSF46785">
    <property type="entry name" value="Winged helix' DNA-binding domain"/>
    <property type="match status" value="1"/>
</dbReference>
<dbReference type="PROSITE" id="PS50238">
    <property type="entry name" value="RHOGAP"/>
    <property type="match status" value="1"/>
</dbReference>
<keyword id="KW-0343">GTPase activation</keyword>
<keyword id="KW-1185">Reference proteome</keyword>
<name>DEP1B_CHICK</name>
<proteinExistence type="evidence at transcript level"/>
<sequence length="529" mass="61114">MEPGLVGPGPYRATRLWNEIIELFRAGMPLRKHRCRFKSYERCFKASEAVDCLHELLGSNQNFGPEVTRSQTVKLLKKFLKNHVIEDIKGRWGKEDFQDDGHLYRFPPSSPLKPYPKKPSFGKEVIKFPDWDDPKAGTSQEHIPVKSIMMNSETWYKRHSIAIGEVPACKLVFRRELTQENIEEIWKSMTLARLQKVLGLDCLDEVIDTKLVNSKHIVQNAYNVNKQGIVTLEDKSKDLPHWILSAMKCLANWPICSDLKQPTYSGFERDVFKTIVDYFGQMKEPLLTFNFFDVFVSVLGLLQKHNEAIEALQISCLLLPPESRRKLQLLVRMMARISFNKDLPPLSESVRTRVLMVQAFSRCILCSKDEMDLDELLAAKLVSFLMDNYQEILSVPSSLKSSIEEHVVHVQRVQIKYAGADTDAAFPAPSFCHQISTDEFEYQRATGSQEPLAALLEEIATNKEISVKDKKKKLKQFQKSYPEVYRVRFPTPETEAVLFPEKSKQKPPLLMWALRKPFQPFHRTRSFRM</sequence>
<feature type="chain" id="PRO_0000284793" description="DEP domain-containing protein 1B">
    <location>
        <begin position="1"/>
        <end position="529"/>
    </location>
</feature>
<feature type="domain" description="DEP">
    <location>
        <begin position="24"/>
        <end position="108"/>
    </location>
</feature>
<feature type="domain" description="Rho-GAP" evidence="1">
    <location>
        <begin position="192"/>
        <end position="393"/>
    </location>
</feature>
<feature type="site" description="Arginine finger; crucial for GTP hydrolysis by stabilizing the transition state" evidence="1">
    <location>
        <position position="231"/>
    </location>
</feature>
<organism>
    <name type="scientific">Gallus gallus</name>
    <name type="common">Chicken</name>
    <dbReference type="NCBI Taxonomy" id="9031"/>
    <lineage>
        <taxon>Eukaryota</taxon>
        <taxon>Metazoa</taxon>
        <taxon>Chordata</taxon>
        <taxon>Craniata</taxon>
        <taxon>Vertebrata</taxon>
        <taxon>Euteleostomi</taxon>
        <taxon>Archelosauria</taxon>
        <taxon>Archosauria</taxon>
        <taxon>Dinosauria</taxon>
        <taxon>Saurischia</taxon>
        <taxon>Theropoda</taxon>
        <taxon>Coelurosauria</taxon>
        <taxon>Aves</taxon>
        <taxon>Neognathae</taxon>
        <taxon>Galloanserae</taxon>
        <taxon>Galliformes</taxon>
        <taxon>Phasianidae</taxon>
        <taxon>Phasianinae</taxon>
        <taxon>Gallus</taxon>
    </lineage>
</organism>